<protein>
    <recommendedName>
        <fullName evidence="9">Polyketide synthase 2</fullName>
        <ecNumber evidence="10">2.3.1.-</ecNumber>
    </recommendedName>
</protein>
<reference key="1">
    <citation type="journal article" date="2014" name="Proc. Natl. Acad. Sci. U.S.A.">
        <title>Trajectory and genomic determinants of fungal-pathogen speciation and host adaptation.</title>
        <authorList>
            <person name="Hu X."/>
            <person name="Xiao G."/>
            <person name="Zheng P."/>
            <person name="Shang Y."/>
            <person name="Su Y."/>
            <person name="Zhang X."/>
            <person name="Liu X."/>
            <person name="Zhan S."/>
            <person name="St Leger R.J."/>
            <person name="Wang C."/>
        </authorList>
    </citation>
    <scope>NUCLEOTIDE SEQUENCE [LARGE SCALE GENOMIC DNA]</scope>
    <source>
        <strain>ARSEF 549</strain>
    </source>
</reference>
<reference key="2">
    <citation type="journal article" date="2018" name="PLoS Genet.">
        <title>Duplication of a Pks gene cluster and subsequent functional diversification facilitate environmental adaptation in Metarhizium species.</title>
        <authorList>
            <person name="Zeng G."/>
            <person name="Zhang P."/>
            <person name="Zhang Q."/>
            <person name="Zhao H."/>
            <person name="Li Z."/>
            <person name="Zhang X."/>
            <person name="Wang C."/>
            <person name="Yin W.B."/>
            <person name="Fang W."/>
        </authorList>
    </citation>
    <scope>IDENTIFICATION</scope>
    <scope>FUNCTION</scope>
    <scope>INDUCTION</scope>
    <scope>DOMAIN</scope>
</reference>
<comment type="function">
    <text evidence="10">Polyketide synthase; part of the Pks2 gene cluster that mediates the formation of infectious structures (appressoria), enabling these fungi to kill insects faster (Probable). The product of the Pks2 gene cluster is different from the one of Pks1 and has still not been identified (Probable).</text>
</comment>
<comment type="induction">
    <text evidence="8">Expression is up-regulated in appressoria-forming germlings on locust cuticle.</text>
</comment>
<comment type="domain">
    <text evidence="10">Multidomain protein; including a starter unit:ACP transacylase (SAT) that selects the starter unit; a ketosynthase (KS) that catalyzes repeated decarboxylative condensation to elongate the polyketide backbone; a malonyl-CoA:ACP transacylase (MAT) that selects and transfers the extender unit malonyl-CoA; a product template (PT) domain that controls the immediate cyclization regioselectivity of the reactive polyketide backbone; and an acyl-carrier protein (ACP) that serves as the tether of the growing and completed polyketide via its phosphopantetheinyl arm.</text>
</comment>
<comment type="domain">
    <text evidence="10">The release of the polyketide chain from the non-reducing polyketide synthase is mediated by the thioesterase (TE) domain localized at the C-ter of the protein.</text>
</comment>
<feature type="chain" id="PRO_0000445747" description="Polyketide synthase 2">
    <location>
        <begin position="1"/>
        <end position="2155"/>
    </location>
</feature>
<feature type="domain" description="Ketosynthase family 3 (KS3)" evidence="4 10">
    <location>
        <begin position="374"/>
        <end position="807"/>
    </location>
</feature>
<feature type="domain" description="PKS/mFAS DH" evidence="5">
    <location>
        <begin position="1294"/>
        <end position="1600"/>
    </location>
</feature>
<feature type="domain" description="Carrier 1" evidence="3 10">
    <location>
        <begin position="1649"/>
        <end position="1726"/>
    </location>
</feature>
<feature type="domain" description="Carrier 2" evidence="3 10">
    <location>
        <begin position="1764"/>
        <end position="1838"/>
    </location>
</feature>
<feature type="region of interest" description="N-terminal acylcarrier protein transacylase domain (SAT)" evidence="2 10">
    <location>
        <begin position="7"/>
        <end position="244"/>
    </location>
</feature>
<feature type="region of interest" description="Malonyl-CoA:ACP transacylase (MAT) domain" evidence="2 10">
    <location>
        <begin position="908"/>
        <end position="1213"/>
    </location>
</feature>
<feature type="region of interest" description="Product template (PT) domain" evidence="2 10">
    <location>
        <begin position="1290"/>
        <end position="1605"/>
    </location>
</feature>
<feature type="region of interest" description="N-terminal hotdog fold" evidence="5">
    <location>
        <begin position="1294"/>
        <end position="1428"/>
    </location>
</feature>
<feature type="region of interest" description="C-terminal hotdog fold" evidence="5">
    <location>
        <begin position="1455"/>
        <end position="1600"/>
    </location>
</feature>
<feature type="region of interest" description="Disordered" evidence="7">
    <location>
        <begin position="1626"/>
        <end position="1654"/>
    </location>
</feature>
<feature type="region of interest" description="Disordered" evidence="7">
    <location>
        <begin position="1735"/>
        <end position="1765"/>
    </location>
</feature>
<feature type="region of interest" description="Thioesterase (TE) domain" evidence="2 10">
    <location>
        <begin position="1873"/>
        <end position="2149"/>
    </location>
</feature>
<feature type="compositionally biased region" description="Polar residues" evidence="7">
    <location>
        <begin position="1643"/>
        <end position="1654"/>
    </location>
</feature>
<feature type="compositionally biased region" description="Polar residues" evidence="7">
    <location>
        <begin position="1736"/>
        <end position="1756"/>
    </location>
</feature>
<feature type="active site" description="For beta-ketoacyl synthase activity" evidence="4">
    <location>
        <position position="546"/>
    </location>
</feature>
<feature type="active site" description="For beta-ketoacyl synthase activity" evidence="4">
    <location>
        <position position="681"/>
    </location>
</feature>
<feature type="active site" description="For beta-ketoacyl synthase activity" evidence="4">
    <location>
        <position position="723"/>
    </location>
</feature>
<feature type="active site" description="For acyl/malonyl transferase activity" evidence="6">
    <location>
        <position position="998"/>
    </location>
</feature>
<feature type="active site" description="Proton acceptor; for dehydratase activity" evidence="5">
    <location>
        <position position="1327"/>
    </location>
</feature>
<feature type="active site" description="Proton donor; for dehydratase activity" evidence="5">
    <location>
        <position position="1514"/>
    </location>
</feature>
<feature type="active site" description="For thioesterase activity" evidence="1">
    <location>
        <position position="1979"/>
    </location>
</feature>
<feature type="modified residue" description="O-(pantetheine 4'-phosphoryl)serine" evidence="3">
    <location>
        <position position="1686"/>
    </location>
</feature>
<feature type="modified residue" description="O-(pantetheine 4'-phosphoryl)serine" evidence="3">
    <location>
        <position position="1798"/>
    </location>
</feature>
<organism>
    <name type="scientific">Metarhizium anisopliae (strain ARSEF 549)</name>
    <dbReference type="NCBI Taxonomy" id="3151832"/>
    <lineage>
        <taxon>Eukaryota</taxon>
        <taxon>Fungi</taxon>
        <taxon>Dikarya</taxon>
        <taxon>Ascomycota</taxon>
        <taxon>Pezizomycotina</taxon>
        <taxon>Sordariomycetes</taxon>
        <taxon>Hypocreomycetidae</taxon>
        <taxon>Hypocreales</taxon>
        <taxon>Clavicipitaceae</taxon>
        <taxon>Metarhizium</taxon>
    </lineage>
</organism>
<evidence type="ECO:0000250" key="1">
    <source>
        <dbReference type="UniProtKB" id="Q03149"/>
    </source>
</evidence>
<evidence type="ECO:0000255" key="2"/>
<evidence type="ECO:0000255" key="3">
    <source>
        <dbReference type="PROSITE-ProRule" id="PRU00258"/>
    </source>
</evidence>
<evidence type="ECO:0000255" key="4">
    <source>
        <dbReference type="PROSITE-ProRule" id="PRU01348"/>
    </source>
</evidence>
<evidence type="ECO:0000255" key="5">
    <source>
        <dbReference type="PROSITE-ProRule" id="PRU01363"/>
    </source>
</evidence>
<evidence type="ECO:0000255" key="6">
    <source>
        <dbReference type="PROSITE-ProRule" id="PRU10022"/>
    </source>
</evidence>
<evidence type="ECO:0000256" key="7">
    <source>
        <dbReference type="SAM" id="MobiDB-lite"/>
    </source>
</evidence>
<evidence type="ECO:0000269" key="8">
    <source>
    </source>
</evidence>
<evidence type="ECO:0000303" key="9">
    <source>
    </source>
</evidence>
<evidence type="ECO:0000305" key="10">
    <source>
    </source>
</evidence>
<name>PKS2_METAF</name>
<proteinExistence type="evidence at transcript level"/>
<sequence length="2155" mass="234222">MQPHRVFIFGDQTGGFATGLQQLLLDKTNPSLVYFVDHANLALRQELSRLPSTDREALPLIGSVQDILTLHKKGERNVVIDSILSTVYHLACFIYKYGNAGCAYPNGQDIHVTGMCVGSLAAAAVSCSRSIGDVIVAGIVAIRAALRVGLRAHQAALLISNRAAPHTHWSYAVSTESLRLDLIKDALEEFAQDMDTSPLSHPYISAIGLDSVTVSGPPSQLQQFWRENTTFHKPIPIPIWAPYHGPHIFGDSDVETIIESLHPIPKLSQQAPIISSGSGVMASQTLADLIRAALRDILLHRLDLPALVGHIKDIVRSSPNQDFSMTPIATNAATGLVAATAKAAGNKGSVDNEIMDAAALAGSASRATSAKTHDSKIAIIGMSGRFPEAADLDSFWSLLEQGVDAYRPVPPDRFDAHAHHDETGRRKNTSKVLGGCWINQPGLFDPKFFSISPKEAEQSDPAQRLALQTAYEALEMAGVVPDRTQSTQRDRVGVFYGMVSDDWREINSGQNIDTYFIPGGIRAFTPGRINYHFKFSGPSITVDTACSSSLAAIHVACNSLWRGDCDTAVAGGVNVLTNPDIFAGLDRGHFLSTTGNCKTFDDDADGYCRADGVGTVILKRLEDAVMDKDPILAILNSAYTNHSAEAVSITRPHAGAQELIFSKLLRETGIHPHDVSYIEMHGTGTQAGDATEMSSVLRTFAPDTRRLSSQTLHLGSAKSNVGHGEAASGVTSLIKVLLMMKHNTIPPHCGIKGRINHRFPTDLRERNVFIASQPVAWNKPHTGSGKRRVFINNFSAAGGNSALLLEDAPAGENPETKDPRSTHVVAVSAKSSTSLANNLKRLRDFVQDNIHDLDSLSKLSYTTTARRIHYPFRTAVTASSRDQLLQGIESVLLRDEMPKPCKSQKNIGFVFSGQGAQYAGMGRHLFQNNHTFRTQILACNQICLSQGFPSILEIFKQDVDMNSLEPLLVQLATTCLQMSLVSFWKSLGVTPDFCIGHSLGEYAALQAAGVLSVSDTIYLTGIRARMLQEKCSAGSHAMLAVRAPLARVNALLDPAIHEVTCLNGPQDVVIGGRVADVEALEKELAKQDIKAVKVSVPFAFHSTQVEPILGEFCDAARGVPFQTQTIPVVSTLLGEVVQPEAAGVFGPGYLKRHCREPVNFAAAVQAARDANVIHAGTVFVEIGPHPVCLALLKSNMGPDAVTLASLHRKDDGWKVLADTLAALYQSGLKINWDEVHRDFASCQEVLPLPSYSWDNKNYWIQYVHNWTLTKGDEPAAMAETTALQAQDGLTSSVQRIIRQTDGPGSLVTIVVQSDFGSARLADVAQGHKVNGEMLCTSSLYAEIGMTLGRHLLEKYRPDLDGYSTEIKDMSVDKPLILKDENKQTLFRAEVVHDKTTHTATMSIYSVDSAGNKTVDHARCLLRFADPTSWLDEWERTYYLIDRSVRWLEERAEQGTDSLLSKGIVYKLFSSLVDYSPSFKGLQEVILNSGDREAAAKVRLQAEKGDFDCNPMWIDSFGQLTGFLMNGHDFTGKDEVFINHGWRSMRCAKPFRKDAVYRTYIRMQHVEKTKYRGDLYIIEDGVIVAVFGGMTFLGMSRSLLNKVLPPRRGAEAINTPHPVAAAQQGMAASAKDTERRPLDIPTRAQRQPSSPQTGTMGRILAILSKEVGLSMETLTDDLVFTDYGVDSLLSLTITGRIREELGLDMDSSIFTHYSTLGELKAFLGADQPDDAVACESSIGQHTPQTSDKGSGTLASQKTDGDTGPDTTLNRVCAIIAEEVGISVQELSSSQDFQELGIDSLSSLTILSRVREELQLDLESDFFDTHPSFYALQKALCGSEASNGAPEANETTPSSDRLESDLRSITWQSGQNIVASPPHATSILVSGSPSTARMILVLFPDGSGSAASYGALAPKIRRDIAVYALNCPWRTNGEEILRLGVTLDQMVAKHLVEVGRILDSHQRGRPGSSNASVGLALGGWSAGGILALEAVRQLREAGVAVQKMVLLDAPNPIGLQNPPPRMFHFLDELGILGAGKGKAPAWVLRHFDAMVTLLKSYRPRRLGAEDAPKCLIVYAKDGICKDPNGPRMDTKPDDAREMLWLLYNRVDFSAEGWKTLVGPQNLAVGVVEDVNHFSMMNPGPKMVEMGNLIGDFLLGPS</sequence>
<accession>A0A0B4FLB2</accession>
<gene>
    <name evidence="9" type="primary">Pks2</name>
    <name type="ORF">MAN_00842</name>
</gene>
<keyword id="KW-0511">Multifunctional enzyme</keyword>
<keyword id="KW-0596">Phosphopantetheine</keyword>
<keyword id="KW-0597">Phosphoprotein</keyword>
<keyword id="KW-0677">Repeat</keyword>
<keyword id="KW-0808">Transferase</keyword>
<dbReference type="EC" id="2.3.1.-" evidence="10"/>
<dbReference type="EMBL" id="AZNF01000001">
    <property type="protein sequence ID" value="KID71243.1"/>
    <property type="molecule type" value="Genomic_DNA"/>
</dbReference>
<dbReference type="SMR" id="A0A0B4FLB2"/>
<dbReference type="ESTHER" id="metra-pks2">
    <property type="family name" value="Thioesterase"/>
</dbReference>
<dbReference type="VEuPathDB" id="FungiDB:MAN_00842"/>
<dbReference type="HOGENOM" id="CLU_000022_6_0_1"/>
<dbReference type="OrthoDB" id="4110at5529"/>
<dbReference type="Proteomes" id="UP000031186">
    <property type="component" value="Unassembled WGS sequence"/>
</dbReference>
<dbReference type="GO" id="GO:0004315">
    <property type="term" value="F:3-oxoacyl-[acyl-carrier-protein] synthase activity"/>
    <property type="evidence" value="ECO:0007669"/>
    <property type="project" value="InterPro"/>
</dbReference>
<dbReference type="GO" id="GO:0004312">
    <property type="term" value="F:fatty acid synthase activity"/>
    <property type="evidence" value="ECO:0007669"/>
    <property type="project" value="TreeGrafter"/>
</dbReference>
<dbReference type="GO" id="GO:0031177">
    <property type="term" value="F:phosphopantetheine binding"/>
    <property type="evidence" value="ECO:0007669"/>
    <property type="project" value="InterPro"/>
</dbReference>
<dbReference type="GO" id="GO:0006633">
    <property type="term" value="P:fatty acid biosynthetic process"/>
    <property type="evidence" value="ECO:0007669"/>
    <property type="project" value="InterPro"/>
</dbReference>
<dbReference type="GO" id="GO:0046189">
    <property type="term" value="P:phenol-containing compound biosynthetic process"/>
    <property type="evidence" value="ECO:0007669"/>
    <property type="project" value="UniProtKB-ARBA"/>
</dbReference>
<dbReference type="GO" id="GO:0030639">
    <property type="term" value="P:polyketide biosynthetic process"/>
    <property type="evidence" value="ECO:0007669"/>
    <property type="project" value="UniProtKB-ARBA"/>
</dbReference>
<dbReference type="GO" id="GO:0009403">
    <property type="term" value="P:toxin biosynthetic process"/>
    <property type="evidence" value="ECO:0007669"/>
    <property type="project" value="UniProtKB-ARBA"/>
</dbReference>
<dbReference type="CDD" id="cd00833">
    <property type="entry name" value="PKS"/>
    <property type="match status" value="1"/>
</dbReference>
<dbReference type="FunFam" id="3.40.366.10:FF:000002">
    <property type="entry name" value="Probable polyketide synthase 2"/>
    <property type="match status" value="1"/>
</dbReference>
<dbReference type="FunFam" id="1.10.1200.10:FF:000011">
    <property type="entry name" value="Sterigmatocystin biosynthesis polyketide synthase"/>
    <property type="match status" value="2"/>
</dbReference>
<dbReference type="FunFam" id="3.10.129.110:FF:000001">
    <property type="entry name" value="Sterigmatocystin biosynthesis polyketide synthase"/>
    <property type="match status" value="1"/>
</dbReference>
<dbReference type="FunFam" id="3.40.47.10:FF:000031">
    <property type="entry name" value="Sterigmatocystin biosynthesis polyketide synthase"/>
    <property type="match status" value="1"/>
</dbReference>
<dbReference type="Gene3D" id="3.30.70.3290">
    <property type="match status" value="1"/>
</dbReference>
<dbReference type="Gene3D" id="3.40.47.10">
    <property type="match status" value="1"/>
</dbReference>
<dbReference type="Gene3D" id="1.10.1200.10">
    <property type="entry name" value="ACP-like"/>
    <property type="match status" value="2"/>
</dbReference>
<dbReference type="Gene3D" id="3.40.50.1820">
    <property type="entry name" value="alpha/beta hydrolase"/>
    <property type="match status" value="1"/>
</dbReference>
<dbReference type="Gene3D" id="3.40.366.10">
    <property type="entry name" value="Malonyl-Coenzyme A Acyl Carrier Protein, domain 2"/>
    <property type="match status" value="2"/>
</dbReference>
<dbReference type="Gene3D" id="3.10.129.110">
    <property type="entry name" value="Polyketide synthase dehydratase"/>
    <property type="match status" value="1"/>
</dbReference>
<dbReference type="InterPro" id="IPR029058">
    <property type="entry name" value="AB_hydrolase_fold"/>
</dbReference>
<dbReference type="InterPro" id="IPR001227">
    <property type="entry name" value="Ac_transferase_dom_sf"/>
</dbReference>
<dbReference type="InterPro" id="IPR036736">
    <property type="entry name" value="ACP-like_sf"/>
</dbReference>
<dbReference type="InterPro" id="IPR014043">
    <property type="entry name" value="Acyl_transferase_dom"/>
</dbReference>
<dbReference type="InterPro" id="IPR016035">
    <property type="entry name" value="Acyl_Trfase/lysoPLipase"/>
</dbReference>
<dbReference type="InterPro" id="IPR018201">
    <property type="entry name" value="Ketoacyl_synth_AS"/>
</dbReference>
<dbReference type="InterPro" id="IPR014031">
    <property type="entry name" value="Ketoacyl_synth_C"/>
</dbReference>
<dbReference type="InterPro" id="IPR014030">
    <property type="entry name" value="Ketoacyl_synth_N"/>
</dbReference>
<dbReference type="InterPro" id="IPR016036">
    <property type="entry name" value="Malonyl_transacylase_ACP-bd"/>
</dbReference>
<dbReference type="InterPro" id="IPR020841">
    <property type="entry name" value="PKS_Beta-ketoAc_synthase_dom"/>
</dbReference>
<dbReference type="InterPro" id="IPR042104">
    <property type="entry name" value="PKS_dehydratase_sf"/>
</dbReference>
<dbReference type="InterPro" id="IPR049551">
    <property type="entry name" value="PKS_DH_C"/>
</dbReference>
<dbReference type="InterPro" id="IPR049900">
    <property type="entry name" value="PKS_mFAS_DH"/>
</dbReference>
<dbReference type="InterPro" id="IPR050091">
    <property type="entry name" value="PKS_NRPS_Biosynth_Enz"/>
</dbReference>
<dbReference type="InterPro" id="IPR020806">
    <property type="entry name" value="PKS_PP-bd"/>
</dbReference>
<dbReference type="InterPro" id="IPR009081">
    <property type="entry name" value="PP-bd_ACP"/>
</dbReference>
<dbReference type="InterPro" id="IPR006162">
    <property type="entry name" value="Ppantetheine_attach_site"/>
</dbReference>
<dbReference type="InterPro" id="IPR030918">
    <property type="entry name" value="PT_fungal_PKS"/>
</dbReference>
<dbReference type="InterPro" id="IPR032088">
    <property type="entry name" value="SAT"/>
</dbReference>
<dbReference type="InterPro" id="IPR001031">
    <property type="entry name" value="Thioesterase"/>
</dbReference>
<dbReference type="InterPro" id="IPR016039">
    <property type="entry name" value="Thiolase-like"/>
</dbReference>
<dbReference type="NCBIfam" id="TIGR04532">
    <property type="entry name" value="PT_fungal_PKS"/>
    <property type="match status" value="1"/>
</dbReference>
<dbReference type="PANTHER" id="PTHR43775:SF45">
    <property type="entry name" value="CONIDIAL PIGMENT POLYKETIDE SYNTHASE ALB1"/>
    <property type="match status" value="1"/>
</dbReference>
<dbReference type="PANTHER" id="PTHR43775">
    <property type="entry name" value="FATTY ACID SYNTHASE"/>
    <property type="match status" value="1"/>
</dbReference>
<dbReference type="Pfam" id="PF00698">
    <property type="entry name" value="Acyl_transf_1"/>
    <property type="match status" value="1"/>
</dbReference>
<dbReference type="Pfam" id="PF22621">
    <property type="entry name" value="CurL-like_PKS_C"/>
    <property type="match status" value="1"/>
</dbReference>
<dbReference type="Pfam" id="PF00109">
    <property type="entry name" value="ketoacyl-synt"/>
    <property type="match status" value="1"/>
</dbReference>
<dbReference type="Pfam" id="PF02801">
    <property type="entry name" value="Ketoacyl-synt_C"/>
    <property type="match status" value="1"/>
</dbReference>
<dbReference type="Pfam" id="PF00550">
    <property type="entry name" value="PP-binding"/>
    <property type="match status" value="2"/>
</dbReference>
<dbReference type="Pfam" id="PF14765">
    <property type="entry name" value="PS-DH"/>
    <property type="match status" value="1"/>
</dbReference>
<dbReference type="Pfam" id="PF16073">
    <property type="entry name" value="SAT"/>
    <property type="match status" value="1"/>
</dbReference>
<dbReference type="Pfam" id="PF00975">
    <property type="entry name" value="Thioesterase"/>
    <property type="match status" value="1"/>
</dbReference>
<dbReference type="SMART" id="SM00827">
    <property type="entry name" value="PKS_AT"/>
    <property type="match status" value="1"/>
</dbReference>
<dbReference type="SMART" id="SM00825">
    <property type="entry name" value="PKS_KS"/>
    <property type="match status" value="1"/>
</dbReference>
<dbReference type="SMART" id="SM00823">
    <property type="entry name" value="PKS_PP"/>
    <property type="match status" value="2"/>
</dbReference>
<dbReference type="SUPFAM" id="SSF47336">
    <property type="entry name" value="ACP-like"/>
    <property type="match status" value="2"/>
</dbReference>
<dbReference type="SUPFAM" id="SSF53474">
    <property type="entry name" value="alpha/beta-Hydrolases"/>
    <property type="match status" value="1"/>
</dbReference>
<dbReference type="SUPFAM" id="SSF52151">
    <property type="entry name" value="FabD/lysophospholipase-like"/>
    <property type="match status" value="1"/>
</dbReference>
<dbReference type="SUPFAM" id="SSF55048">
    <property type="entry name" value="Probable ACP-binding domain of malonyl-CoA ACP transacylase"/>
    <property type="match status" value="1"/>
</dbReference>
<dbReference type="SUPFAM" id="SSF53901">
    <property type="entry name" value="Thiolase-like"/>
    <property type="match status" value="1"/>
</dbReference>
<dbReference type="PROSITE" id="PS50075">
    <property type="entry name" value="CARRIER"/>
    <property type="match status" value="2"/>
</dbReference>
<dbReference type="PROSITE" id="PS00606">
    <property type="entry name" value="KS3_1"/>
    <property type="match status" value="1"/>
</dbReference>
<dbReference type="PROSITE" id="PS52004">
    <property type="entry name" value="KS3_2"/>
    <property type="match status" value="1"/>
</dbReference>
<dbReference type="PROSITE" id="PS00012">
    <property type="entry name" value="PHOSPHOPANTETHEINE"/>
    <property type="match status" value="2"/>
</dbReference>
<dbReference type="PROSITE" id="PS52019">
    <property type="entry name" value="PKS_MFAS_DH"/>
    <property type="match status" value="1"/>
</dbReference>